<organism>
    <name type="scientific">Rous sarcoma virus subgroup B (strain Schmidt-Ruppin)</name>
    <name type="common">RSV-SR-B</name>
    <dbReference type="NCBI Taxonomy" id="269447"/>
    <lineage>
        <taxon>Viruses</taxon>
        <taxon>Riboviria</taxon>
        <taxon>Pararnavirae</taxon>
        <taxon>Artverviricota</taxon>
        <taxon>Revtraviricetes</taxon>
        <taxon>Ortervirales</taxon>
        <taxon>Retroviridae</taxon>
        <taxon>Orthoretrovirinae</taxon>
        <taxon>Alpharetrovirus</taxon>
        <taxon>Rous sarcoma virus</taxon>
    </lineage>
</organism>
<gene>
    <name type="primary">gag-pol</name>
</gene>
<keyword id="KW-0002">3D-structure</keyword>
<keyword id="KW-0229">DNA integration</keyword>
<keyword id="KW-0233">DNA recombination</keyword>
<keyword id="KW-0238">DNA-binding</keyword>
<keyword id="KW-0255">Endonuclease</keyword>
<keyword id="KW-0378">Hydrolase</keyword>
<keyword id="KW-0460">Magnesium</keyword>
<keyword id="KW-0479">Metal-binding</keyword>
<keyword id="KW-0511">Multifunctional enzyme</keyword>
<keyword id="KW-0540">Nuclease</keyword>
<keyword id="KW-0548">Nucleotidyltransferase</keyword>
<keyword id="KW-0688">Ribosomal frameshifting</keyword>
<keyword id="KW-0695">RNA-directed DNA polymerase</keyword>
<keyword id="KW-0808">Transferase</keyword>
<keyword id="KW-1179">Viral genome integration</keyword>
<keyword id="KW-0946">Virion</keyword>
<keyword id="KW-1160">Virus entry into host cell</keyword>
<keyword id="KW-0862">Zinc</keyword>
<keyword id="KW-0863">Zinc-finger</keyword>
<evidence type="ECO:0000250" key="1"/>
<evidence type="ECO:0000250" key="2">
    <source>
        <dbReference type="UniProtKB" id="P03322"/>
    </source>
</evidence>
<evidence type="ECO:0000250" key="3">
    <source>
        <dbReference type="UniProtKB" id="P03354"/>
    </source>
</evidence>
<evidence type="ECO:0000250" key="4">
    <source>
        <dbReference type="UniProtKB" id="P0C776"/>
    </source>
</evidence>
<evidence type="ECO:0000250" key="5">
    <source>
        <dbReference type="UniProtKB" id="Q04095"/>
    </source>
</evidence>
<evidence type="ECO:0000255" key="6">
    <source>
        <dbReference type="PROSITE-ProRule" id="PRU00047"/>
    </source>
</evidence>
<evidence type="ECO:0000255" key="7">
    <source>
        <dbReference type="PROSITE-ProRule" id="PRU00275"/>
    </source>
</evidence>
<evidence type="ECO:0000255" key="8">
    <source>
        <dbReference type="PROSITE-ProRule" id="PRU00405"/>
    </source>
</evidence>
<evidence type="ECO:0000255" key="9">
    <source>
        <dbReference type="PROSITE-ProRule" id="PRU00408"/>
    </source>
</evidence>
<evidence type="ECO:0000255" key="10">
    <source>
        <dbReference type="PROSITE-ProRule" id="PRU00450"/>
    </source>
</evidence>
<evidence type="ECO:0000255" key="11">
    <source>
        <dbReference type="PROSITE-ProRule" id="PRU00457"/>
    </source>
</evidence>
<evidence type="ECO:0000255" key="12">
    <source>
        <dbReference type="PROSITE-ProRule" id="PRU00506"/>
    </source>
</evidence>
<evidence type="ECO:0000255" key="13">
    <source>
        <dbReference type="PROSITE-ProRule" id="PRU10094"/>
    </source>
</evidence>
<evidence type="ECO:0000256" key="14">
    <source>
        <dbReference type="SAM" id="MobiDB-lite"/>
    </source>
</evidence>
<evidence type="ECO:0000269" key="15">
    <source>
    </source>
</evidence>
<evidence type="ECO:0000269" key="16">
    <source>
    </source>
</evidence>
<evidence type="ECO:0000269" key="17">
    <source>
    </source>
</evidence>
<evidence type="ECO:0000269" key="18">
    <source>
    </source>
</evidence>
<evidence type="ECO:0000303" key="19">
    <source>
    </source>
</evidence>
<evidence type="ECO:0000303" key="20">
    <source>
    </source>
</evidence>
<evidence type="ECO:0000305" key="21"/>
<evidence type="ECO:0000305" key="22">
    <source>
    </source>
</evidence>
<evidence type="ECO:0007744" key="23">
    <source>
        <dbReference type="PDB" id="1A5V"/>
    </source>
</evidence>
<evidence type="ECO:0007744" key="24">
    <source>
        <dbReference type="PDB" id="1A5W"/>
    </source>
</evidence>
<evidence type="ECO:0007744" key="25">
    <source>
        <dbReference type="PDB" id="1A5X"/>
    </source>
</evidence>
<evidence type="ECO:0007744" key="26">
    <source>
        <dbReference type="PDB" id="1ASU"/>
    </source>
</evidence>
<evidence type="ECO:0007744" key="27">
    <source>
        <dbReference type="PDB" id="1ASV"/>
    </source>
</evidence>
<evidence type="ECO:0007744" key="28">
    <source>
        <dbReference type="PDB" id="1ASW"/>
    </source>
</evidence>
<evidence type="ECO:0007744" key="29">
    <source>
        <dbReference type="PDB" id="1CXQ"/>
    </source>
</evidence>
<evidence type="ECO:0007744" key="30">
    <source>
        <dbReference type="PDB" id="1CXU"/>
    </source>
</evidence>
<evidence type="ECO:0007744" key="31">
    <source>
        <dbReference type="PDB" id="1CZ9"/>
    </source>
</evidence>
<evidence type="ECO:0007744" key="32">
    <source>
        <dbReference type="PDB" id="1CZB"/>
    </source>
</evidence>
<evidence type="ECO:0007744" key="33">
    <source>
        <dbReference type="PDB" id="1VSD"/>
    </source>
</evidence>
<evidence type="ECO:0007744" key="34">
    <source>
        <dbReference type="PDB" id="1VSE"/>
    </source>
</evidence>
<evidence type="ECO:0007744" key="35">
    <source>
        <dbReference type="PDB" id="1VSF"/>
    </source>
</evidence>
<evidence type="ECO:0007744" key="36">
    <source>
        <dbReference type="PDB" id="1VSH"/>
    </source>
</evidence>
<evidence type="ECO:0007744" key="37">
    <source>
        <dbReference type="PDB" id="1VSI"/>
    </source>
</evidence>
<evidence type="ECO:0007744" key="38">
    <source>
        <dbReference type="PDB" id="1VSJ"/>
    </source>
</evidence>
<evidence type="ECO:0007744" key="39">
    <source>
        <dbReference type="PDB" id="1VSK"/>
    </source>
</evidence>
<evidence type="ECO:0007744" key="40">
    <source>
        <dbReference type="PDB" id="1VSL"/>
    </source>
</evidence>
<evidence type="ECO:0007744" key="41">
    <source>
        <dbReference type="PDB" id="1VSM"/>
    </source>
</evidence>
<evidence type="ECO:0007829" key="42">
    <source>
        <dbReference type="PDB" id="1ASU"/>
    </source>
</evidence>
<evidence type="ECO:0007829" key="43">
    <source>
        <dbReference type="PDB" id="1CXQ"/>
    </source>
</evidence>
<proteinExistence type="evidence at protein level"/>
<comment type="function">
    <text evidence="2">Capsid protein p27: Self-associates to form the irregular polyhedron core composed of hexamers and pentamers, that encapsulates the genomic RNA-nucleocapsid complex. Assembles as a tube in vitro. Binds to inositol hexakisphosphate (IP6), which allows the assembly of the polyhedral capsid.</text>
</comment>
<comment type="function">
    <molecule>Spacer peptide</molecule>
    <text evidence="2">Plays a role in the oligomerization of the Gag polyprotein and in the stabilization of the immature particle. Essential layering element during tube assembly. Allows the cooperative binging of Gag to the host plasma membrane.</text>
</comment>
<comment type="function">
    <molecule>Nucleocapsid protein p12</molecule>
    <text evidence="2 4">Binds strongly to viral nucleic acids and promotes their packaging (By similarity). Plays a role in the maturation-stabilization of the viral dimeric RNA via highly structured zinc-binding motifs (By similarity).</text>
</comment>
<comment type="function">
    <molecule>Protease p15</molecule>
    <text evidence="7">The aspartyl protease mediates proteolytic cleavages of Gag and Gag-Pol polyproteins during or shortly after the release of the virion from the plasma membrane. Cleavages take place as an ordered, step-wise cascade to yield mature proteins. This process is called maturation. Displays maximal activity during the budding process just prior to particle release from the cell.</text>
</comment>
<comment type="function">
    <molecule>Integrase</molecule>
    <text evidence="3 17">Catalyzes viral DNA integration into the host chromosome, by performing a series of DNA cutting and joining reactions (PubMed:9218451). This recombination event is an essential step in the viral replication cycle. Has a strong preference for using the 3'-OH at the viral DNA end as a nucleophile.</text>
</comment>
<comment type="catalytic activity">
    <molecule>Reverse transcriptase alpha-subunit</molecule>
    <reaction evidence="8">
        <text>DNA(n) + a 2'-deoxyribonucleoside 5'-triphosphate = DNA(n+1) + diphosphate</text>
        <dbReference type="Rhea" id="RHEA:22508"/>
        <dbReference type="Rhea" id="RHEA-COMP:17339"/>
        <dbReference type="Rhea" id="RHEA-COMP:17340"/>
        <dbReference type="ChEBI" id="CHEBI:33019"/>
        <dbReference type="ChEBI" id="CHEBI:61560"/>
        <dbReference type="ChEBI" id="CHEBI:173112"/>
        <dbReference type="EC" id="2.7.7.49"/>
    </reaction>
</comment>
<comment type="catalytic activity">
    <molecule>Reverse transcriptase alpha-subunit</molecule>
    <reaction evidence="8">
        <text>DNA(n) + a 2'-deoxyribonucleoside 5'-triphosphate = DNA(n+1) + diphosphate</text>
        <dbReference type="Rhea" id="RHEA:22508"/>
        <dbReference type="Rhea" id="RHEA-COMP:17339"/>
        <dbReference type="Rhea" id="RHEA-COMP:17340"/>
        <dbReference type="ChEBI" id="CHEBI:33019"/>
        <dbReference type="ChEBI" id="CHEBI:61560"/>
        <dbReference type="ChEBI" id="CHEBI:173112"/>
        <dbReference type="EC" id="2.7.7.7"/>
    </reaction>
</comment>
<comment type="catalytic activity">
    <molecule>Reverse transcriptase alpha-subunit</molecule>
    <reaction evidence="9">
        <text>Endonucleolytic cleavage to 5'-phosphomonoester.</text>
        <dbReference type="EC" id="3.1.26.4"/>
    </reaction>
</comment>
<comment type="cofactor">
    <molecule>Reverse transcriptase alpha-subunit</molecule>
    <cofactor evidence="1">
        <name>Mg(2+)</name>
        <dbReference type="ChEBI" id="CHEBI:18420"/>
    </cofactor>
    <text evidence="8">The RT polymerase active site binds 2 magnesium ions.</text>
</comment>
<comment type="cofactor">
    <molecule>Reverse transcriptase alpha-subunit</molecule>
    <cofactor evidence="1">
        <name>Mg(2+)</name>
        <dbReference type="ChEBI" id="CHEBI:18420"/>
    </cofactor>
    <text evidence="1">Binds 2 magnesium ions for ribonuclease H (RNase H) activity. Substrate-binding is a precondition for magnesium binding.</text>
</comment>
<comment type="cofactor">
    <molecule>Integrase</molecule>
    <cofactor evidence="16 17">
        <name>Mg(2+)</name>
        <dbReference type="ChEBI" id="CHEBI:18420"/>
    </cofactor>
    <cofactor evidence="16 17">
        <name>Mn(2+)</name>
        <dbReference type="ChEBI" id="CHEBI:29035"/>
    </cofactor>
    <text evidence="17 22">Binds 8 Mg(2+) ions per integrase homotetramer (Probable). Zn(2+) can also be a cofactor for the nicking activity, but not for the polynucleotidyltransferase activity (PubMed:9218451).</text>
</comment>
<comment type="subunit">
    <molecule>Protease p15</molecule>
    <text evidence="2">Active as a homodimer.</text>
</comment>
<comment type="subunit">
    <molecule>Capsid protein p27, alternate cleaved 1</molecule>
    <text evidence="2">Homodimer. Homomultimer. Homohexamer.</text>
</comment>
<comment type="subunit">
    <molecule>Capsid protein p27, alternate cleaved 2</molecule>
    <text evidence="2">Homodimer. Homomultimer. Homohexamer.</text>
</comment>
<comment type="subunit">
    <molecule>Integrase</molecule>
    <text evidence="15 19 20">Homodimer; further associates as a homooctamer.</text>
</comment>
<comment type="subunit">
    <molecule>Reverse transcriptase beta-subunit</molecule>
    <text evidence="3">Heterodimer of alpha and beta subunits. Three forms of RT exist: alpha-alpha (alpha-Pol), beta-beta (beta-Pol), and alpha-beta, with the major form being the heterodimer. Both the polymerase and RNase H active sites are located in the alpha subunit of heterodimeric RT alpha-beta.</text>
</comment>
<comment type="subunit">
    <molecule>Reverse transcriptase alpha-subunit</molecule>
    <text evidence="3">Heterodimer of alpha and beta subunits. Three forms of RT exist: alpha-alpha (alpha-Pol), beta-beta (beta-Pol), and alpha-beta, with the major form being the heterodimer. Both the polymerase and RNase H active sites are located in the alpha subunit of heterodimeric RT alpha-beta.</text>
</comment>
<comment type="subcellular location">
    <molecule>Matrix protein p19</molecule>
    <subcellularLocation>
        <location evidence="3">Virion</location>
    </subcellularLocation>
</comment>
<comment type="subcellular location">
    <molecule>Capsid protein p27, alternate cleaved 1</molecule>
    <subcellularLocation>
        <location evidence="3">Virion</location>
    </subcellularLocation>
</comment>
<comment type="subcellular location">
    <molecule>Capsid protein p27, alternate cleaved 2</molecule>
    <subcellularLocation>
        <location evidence="3">Virion</location>
    </subcellularLocation>
</comment>
<comment type="subcellular location">
    <molecule>Nucleocapsid protein p12</molecule>
    <subcellularLocation>
        <location evidence="3">Virion</location>
    </subcellularLocation>
</comment>
<comment type="alternative products">
    <event type="ribosomal frameshifting"/>
    <isoform>
        <id>O92956-1</id>
        <name>Gag-Pol polyprotein</name>
        <sequence type="displayed"/>
    </isoform>
    <isoform>
        <id>O92954-1</id>
        <name>Gag polyprotein</name>
        <sequence type="external"/>
    </isoform>
    <text evidence="5">Translation results in the formation of the Gag polyprotein. Ribosomal frameshifting at the gag/pol genes boundary produces the Gag-Pol polyprotein.</text>
</comment>
<comment type="domain">
    <molecule>Gag-Pol polyprotein</molecule>
    <text evidence="3">Late-budding domains (L domains) are short sequence motifs essential for viral particle release. They can occur individually or in close proximity within structural proteins. They interacts with sorting cellular proteins of the multivesicular body (MVB) pathway. Most of these proteins are class E vacuolar protein sorting factors belonging to ESCRT-I, ESCRT-II or ESCRT-III complexes. P2B contains two L domain: a PPXY motif which probably binds to the WW domains of HECT (homologous to E6-AP C-terminus) E3 ubiquitin ligases and a LYPX(n)L domain which is known to bind the Alix adaptator protein.</text>
</comment>
<comment type="domain">
    <molecule>Integrase</molecule>
    <text evidence="22">The core domain contains the D-x(n)-D-x(35)-E motif, named for the phylogenetically conserved glutamic acid and aspartic acid residues and the invariant 35 amino acid spacing between the second and third acidic residues. Each acidic residue of the D,D(35)E motif is independently essential for the 3'-processing and strand transfer activities of purified integrase protein.</text>
</comment>
<comment type="domain">
    <molecule>Gag-Pol polyprotein</molecule>
    <text evidence="2">Contains a nuclear export signal in p10 and a nucleolar localization signal in nucleocapsid protein p12.</text>
</comment>
<comment type="domain">
    <text evidence="2">Capsid protein p27: Proton-driven dimerization of the C-terminus facilitates capsid assembly.</text>
</comment>
<comment type="PTM">
    <molecule>Isoform Gag-Pol polyprotein</molecule>
    <text evidence="3">Specific enzymatic cleavages in vivo yield mature proteins.</text>
</comment>
<comment type="PTM">
    <text evidence="2">Capsid protein p27: The cleavage at the C-terminus is slowly trimmed by the viral protease, sometimes being cut internally thereby generating the short version of the capsid protein and a capsid protein C-terminally extended by 3 amino acids in a ratio of 2:1.</text>
</comment>
<comment type="miscellaneous">
    <text evidence="8">Reverse transcriptase: Error-prone enzyme that lacks a proof-reading function. High mutations rate is a direct consequence of this characteristic. RT also displays frequent template switching leading to high recombination rate. Recombination mostly occurs between homologous regions of the two copackaged RNA genomes. If these two RNA molecules derive from different viral strains, reverse transcription will give rise to highly recombinated proviral DNAs.</text>
</comment>
<comment type="miscellaneous">
    <molecule>Isoform Gag-Pol polyprotein</molecule>
    <text evidence="5">Produced by -1 ribosomal frameshifting.</text>
</comment>
<comment type="sequence caution" evidence="21">
    <conflict type="erroneous initiation">
        <sequence resource="EMBL-CDS" id="AAC08988"/>
    </conflict>
</comment>
<protein>
    <recommendedName>
        <fullName>Gag-Pol polyprotein</fullName>
    </recommendedName>
    <component>
        <recommendedName>
            <fullName>Matrix protein p19</fullName>
        </recommendedName>
    </component>
    <component>
        <recommendedName>
            <fullName>p2A</fullName>
        </recommendedName>
    </component>
    <component>
        <recommendedName>
            <fullName>p2B</fullName>
        </recommendedName>
    </component>
    <component>
        <recommendedName>
            <fullName>p10</fullName>
        </recommendedName>
    </component>
    <component>
        <recommendedName>
            <fullName>Capsid protein p27, alternate cleaved 1</fullName>
        </recommendedName>
    </component>
    <component>
        <recommendedName>
            <fullName>Capsid protein p27, alternate cleaved 2</fullName>
        </recommendedName>
    </component>
    <component>
        <recommendedName>
            <fullName>Spacer peptide</fullName>
            <shortName>SP</shortName>
        </recommendedName>
        <alternativeName>
            <fullName>p3</fullName>
        </alternativeName>
    </component>
    <component>
        <recommendedName>
            <fullName>Nucleocapsid protein p12</fullName>
        </recommendedName>
        <alternativeName>
            <fullName evidence="4">NCp12</fullName>
        </alternativeName>
    </component>
    <component>
        <recommendedName>
            <fullName>Protease p15</fullName>
            <ecNumber evidence="7">3.4.23.-</ecNumber>
        </recommendedName>
    </component>
    <component>
        <recommendedName>
            <fullName>Reverse transcriptase beta-subunit</fullName>
            <shortName>RT-beta</shortName>
        </recommendedName>
    </component>
    <component>
        <recommendedName>
            <fullName>Reverse transcriptase alpha-subunit</fullName>
            <shortName>RT-alpha</shortName>
            <ecNumber evidence="8">2.7.7.49</ecNumber>
            <ecNumber evidence="8">2.7.7.7</ecNumber>
            <ecNumber evidence="9">3.1.26.4</ecNumber>
        </recommendedName>
    </component>
    <component>
        <recommendedName>
            <fullName>Integrase</fullName>
            <shortName>IN</shortName>
            <ecNumber evidence="17">2.7.7.-</ecNumber>
            <ecNumber evidence="17">3.1.-.-</ecNumber>
        </recommendedName>
        <alternativeName>
            <fullName>pp32</fullName>
        </alternativeName>
    </component>
    <component>
        <recommendedName>
            <fullName>p4</fullName>
        </recommendedName>
    </component>
</protein>
<accession>O92956</accession>
<sequence>MEAVIKVISSACKTYCGKTSPSKKEIGAMLSLLQKEGLLMSPSDLYSPGSWDPITAALSQRAMVLGKSGELKTWGLVLGALKAAREEQVTSEQAKFWLGLGGGRVSPPGPECIEKPATERRIDKGEEVGETTVQRDAKMAPEETATPKTVGTSCYHCGTAIGCNCATASAPPPPYVGSGLYPSLAGVGEQQGQGGDTPRGAEQPRAEPGHAGLAPGPALTDWARIREELASTGPPVVAMPVVIKTEGPAWTPLEPKLITRLADTVRTKGLRSPITMAEVEALMSSPLLPHDVTNLMRVILGPAPYALWMDAWGVQLQTVIAAATRDPRHPANGQGRGERTNLDRLKGLADGMVGNPQGQAALLRPGELVAITASALQAFREVARLAEPAGPWADITQGPSESFVDFANRLIKAVEGSDLPPSARAPVIIDCFRQKSQPDIQQLIRAAPSTLTTPGEIIKYVLDRQKIAPLTDQGIAAAMSSAIQPLVMAVVNRERDGQTGSGGRARRLCYTCGSPGHYQAQCPKKRKSGNSRERCQLCDGMGHNAKQCRRRDSNQGQRPGRGLSSGPWPVSEQPAVSLAMTMEHKDRPLVRVILTNTGSHPVKQRSVYITALLDSGADITIISEEDWPTDWPVVDTANPQIHGIGGGIPMRKSRDMIELGVINRDGSLERPLLLFPAVAMVRGSILGRDCLQGLGLRLTNLVGRATVLTVALHLAIPLKWKPDHTPVWIDQWPLPEGKLVALTQLVEKELQLGHIEPSLSCWNTPVFVIRKASGSYRLLHDLRAVNAKLVPFGAVQQGAPVLSALPRGWPLMVLDLKDCFFSIPLAEQDREAFAFTLPSVNNQAPARRFQWKVLPQGMTCSPTICQLVVGQVLEPLRLKHPSLRMLHYMDDLLLAASSHDGLEAAGEEVINTLERAGFTISPDKIQREPGVQYLGYKLGSTYVAPVGLVAEPRIATLWDVQKLVGSLQWLRPALGIPPRLMGPFYEQLRGSDPNEAREWNLDMKMAWREIVQLSTTAALERWDPALPLEGAVVRCEQGAIGVLGQGLSTHPRPCLWLFSTQPTKAFTAWLEVLTLLITKLRASAVRTFGKEVDILLLPACFREDLPLPEGILLALRGFAGKIRSSDTPSIFDIARPLHVSLKVRVTDHPVPGPTVFTDASSSTHKGVVVWREGPRWEIKEIADLGASVQQLEARAVAMALLLWPTTPTNVVTDSAFVAKMLLKMGQEGVPSTAAAFILEDALSQRSAMAAVLHVRSHSEVPGFFTEGNDVADSQATFQAYPLREAKDLHTTLHIGPRALSKACNISMQQAREVVQTCPHCNSAPALEAGVNPRGLGPLQIWQTDFTLEPRMAPRSWLAVTVDTASSAIVVTQHGRVTSVAAQHHWATAIAVLGRPKAIKTDNGSCFTSKSTREWLARWGIAHTTGIPGNSQGQAMVERANRLLKDKIRVLAEGDGFMKRIPASKQGELLAKAMYALNHFERGENTKTPVQKHWRPTVLTEGPPVKIRIETGEWEKGWNVLVWGRGYAAVKNRDTDKVIWVPSRKVKPDITQKDEVTKKDEASPLFAGSSDWIPWGDEQEGLQEEAASNKQEGPGEDTLAANES</sequence>
<name>POL_RSVSB</name>
<feature type="chain" id="PRO_0000442480" description="Gag-Pol polyprotein">
    <location>
        <begin position="1"/>
        <end position="1603"/>
    </location>
</feature>
<feature type="chain" id="PRO_0000397058" description="Matrix protein p19">
    <location>
        <begin position="1"/>
        <end position="155"/>
    </location>
</feature>
<feature type="chain" id="PRO_0000397059" description="p2A">
    <location>
        <begin position="156"/>
        <end position="166"/>
    </location>
</feature>
<feature type="chain" id="PRO_0000397060" description="p2B">
    <location>
        <begin position="167"/>
        <end position="177"/>
    </location>
</feature>
<feature type="chain" id="PRO_0000397061" description="p10">
    <location>
        <begin position="178"/>
        <end position="239"/>
    </location>
</feature>
<feature type="chain" id="PRO_0000397062" description="Capsid protein p27, alternate cleaved 2">
    <location>
        <begin position="240"/>
        <end position="479"/>
    </location>
</feature>
<feature type="chain" id="PRO_0000442481" description="Capsid protein p27, alternate cleaved 1">
    <location>
        <begin position="240"/>
        <end position="476"/>
    </location>
</feature>
<feature type="chain" id="PRO_0000397063" description="Spacer peptide">
    <location>
        <begin position="480"/>
        <end position="488"/>
    </location>
</feature>
<feature type="chain" id="PRO_0000397064" description="Nucleocapsid protein p12">
    <location>
        <begin position="489"/>
        <end position="577"/>
    </location>
</feature>
<feature type="chain" id="PRO_0000397065" description="Protease p15">
    <location>
        <begin position="578"/>
        <end position="708"/>
    </location>
</feature>
<feature type="chain" id="PRO_0000397066" description="Reverse transcriptase beta-subunit">
    <location>
        <begin position="709"/>
        <end position="1567"/>
    </location>
</feature>
<feature type="chain" id="PRO_0000040984" description="Reverse transcriptase alpha-subunit">
    <location>
        <begin position="709"/>
        <end position="1280"/>
    </location>
</feature>
<feature type="chain" id="PRO_0000040985" description="Integrase">
    <location>
        <begin position="1281"/>
        <end position="1567"/>
    </location>
</feature>
<feature type="chain" id="PRO_0000397067" description="p4">
    <location>
        <begin position="1568"/>
        <end position="1603"/>
    </location>
</feature>
<feature type="domain" description="Peptidase A2" evidence="7">
    <location>
        <begin position="609"/>
        <end position="690"/>
    </location>
</feature>
<feature type="domain" description="Reverse transcriptase" evidence="8">
    <location>
        <begin position="750"/>
        <end position="938"/>
    </location>
</feature>
<feature type="domain" description="RNase H type-1" evidence="9">
    <location>
        <begin position="1149"/>
        <end position="1280"/>
    </location>
</feature>
<feature type="domain" description="Integrase catalytic" evidence="11">
    <location>
        <begin position="1333"/>
        <end position="1496"/>
    </location>
</feature>
<feature type="zinc finger region" description="CCHC-type" evidence="6">
    <location>
        <begin position="507"/>
        <end position="524"/>
    </location>
</feature>
<feature type="zinc finger region" description="CCHC-type" evidence="6">
    <location>
        <begin position="533"/>
        <end position="550"/>
    </location>
</feature>
<feature type="zinc finger region" description="Integrase-type" evidence="10">
    <location>
        <begin position="1280"/>
        <end position="1321"/>
    </location>
</feature>
<feature type="DNA-binding region" description="Integrase-type" evidence="12">
    <location>
        <begin position="1502"/>
        <end position="1550"/>
    </location>
</feature>
<feature type="region of interest" description="Disordered" evidence="14">
    <location>
        <begin position="128"/>
        <end position="150"/>
    </location>
</feature>
<feature type="region of interest" description="Disordered" evidence="14">
    <location>
        <begin position="181"/>
        <end position="215"/>
    </location>
</feature>
<feature type="region of interest" description="Disordered" evidence="14">
    <location>
        <begin position="544"/>
        <end position="571"/>
    </location>
</feature>
<feature type="region of interest" description="Involved in homooctamerization" evidence="3">
    <location>
        <begin position="1548"/>
        <end position="1567"/>
    </location>
</feature>
<feature type="region of interest" description="Disordered" evidence="14">
    <location>
        <begin position="1549"/>
        <end position="1603"/>
    </location>
</feature>
<feature type="short sequence motif" description="PPXY motif" evidence="2">
    <location>
        <begin position="172"/>
        <end position="175"/>
    </location>
</feature>
<feature type="short sequence motif" description="LYPX(n)L motif" evidence="2">
    <location>
        <begin position="180"/>
        <end position="184"/>
    </location>
</feature>
<feature type="short sequence motif" description="Nuclear export signal" evidence="2">
    <location>
        <begin position="219"/>
        <end position="229"/>
    </location>
</feature>
<feature type="compositionally biased region" description="Basic and acidic residues" evidence="14">
    <location>
        <begin position="128"/>
        <end position="141"/>
    </location>
</feature>
<feature type="compositionally biased region" description="Basic and acidic residues" evidence="14">
    <location>
        <begin position="1549"/>
        <end position="1561"/>
    </location>
</feature>
<feature type="active site" description="For protease activity; shared with dimeric partner" evidence="13">
    <location>
        <position position="614"/>
    </location>
</feature>
<feature type="binding site" evidence="8">
    <location>
        <position position="815"/>
    </location>
    <ligand>
        <name>Mg(2+)</name>
        <dbReference type="ChEBI" id="CHEBI:18420"/>
        <label>1</label>
        <note>catalytic; for reverse transcriptase activity</note>
    </ligand>
</feature>
<feature type="binding site" evidence="8">
    <location>
        <position position="890"/>
    </location>
    <ligand>
        <name>Mg(2+)</name>
        <dbReference type="ChEBI" id="CHEBI:18420"/>
        <label>1</label>
        <note>catalytic; for reverse transcriptase activity</note>
    </ligand>
</feature>
<feature type="binding site" evidence="8">
    <location>
        <position position="891"/>
    </location>
    <ligand>
        <name>Mg(2+)</name>
        <dbReference type="ChEBI" id="CHEBI:18420"/>
        <label>1</label>
        <note>catalytic; for reverse transcriptase activity</note>
    </ligand>
</feature>
<feature type="binding site" evidence="9">
    <location>
        <position position="1158"/>
    </location>
    <ligand>
        <name>Mg(2+)</name>
        <dbReference type="ChEBI" id="CHEBI:18420"/>
        <label>2</label>
        <note>catalytic; for RNase H activity</note>
    </ligand>
</feature>
<feature type="binding site" evidence="9">
    <location>
        <position position="1192"/>
    </location>
    <ligand>
        <name>Mg(2+)</name>
        <dbReference type="ChEBI" id="CHEBI:18420"/>
        <label>2</label>
        <note>catalytic; for RNase H activity</note>
    </ligand>
</feature>
<feature type="binding site" evidence="9">
    <location>
        <position position="1213"/>
    </location>
    <ligand>
        <name>Mg(2+)</name>
        <dbReference type="ChEBI" id="CHEBI:18420"/>
        <label>2</label>
        <note>catalytic; for RNase H activity</note>
    </ligand>
</feature>
<feature type="binding site" evidence="9">
    <location>
        <position position="1272"/>
    </location>
    <ligand>
        <name>Mg(2+)</name>
        <dbReference type="ChEBI" id="CHEBI:18420"/>
        <label>2</label>
        <note>catalytic; for RNase H activity</note>
    </ligand>
</feature>
<feature type="binding site" evidence="10">
    <location>
        <position position="1289"/>
    </location>
    <ligand>
        <name>Zn(2+)</name>
        <dbReference type="ChEBI" id="CHEBI:29105"/>
    </ligand>
</feature>
<feature type="binding site" evidence="10">
    <location>
        <position position="1293"/>
    </location>
    <ligand>
        <name>Zn(2+)</name>
        <dbReference type="ChEBI" id="CHEBI:29105"/>
    </ligand>
</feature>
<feature type="binding site" evidence="10">
    <location>
        <position position="1317"/>
    </location>
    <ligand>
        <name>Zn(2+)</name>
        <dbReference type="ChEBI" id="CHEBI:29105"/>
    </ligand>
</feature>
<feature type="binding site" evidence="10">
    <location>
        <position position="1320"/>
    </location>
    <ligand>
        <name>Zn(2+)</name>
        <dbReference type="ChEBI" id="CHEBI:29105"/>
    </ligand>
</feature>
<feature type="binding site" evidence="11 16 17">
    <location>
        <position position="1344"/>
    </location>
    <ligand>
        <name>Mg(2+)</name>
        <dbReference type="ChEBI" id="CHEBI:18420"/>
        <label>3</label>
        <note>catalytic; for integrase activity</note>
    </ligand>
</feature>
<feature type="binding site" evidence="11 16 17">
    <location>
        <position position="1401"/>
    </location>
    <ligand>
        <name>Mg(2+)</name>
        <dbReference type="ChEBI" id="CHEBI:18420"/>
        <label>3</label>
        <note>catalytic; for integrase activity</note>
    </ligand>
</feature>
<feature type="binding site" evidence="3 16 17">
    <location>
        <position position="1437"/>
    </location>
    <ligand>
        <name>Mg(2+)</name>
        <dbReference type="ChEBI" id="CHEBI:18420"/>
        <label>3</label>
        <note>catalytic; for integrase activity</note>
    </ligand>
</feature>
<feature type="site" description="Cleavage; by viral protease p15" evidence="2">
    <location>
        <begin position="155"/>
        <end position="156"/>
    </location>
</feature>
<feature type="site" description="Cleavage; by viral protease p15" evidence="2">
    <location>
        <begin position="166"/>
        <end position="167"/>
    </location>
</feature>
<feature type="site" description="Cleavage; by viral protease p15" evidence="2">
    <location>
        <begin position="177"/>
        <end position="178"/>
    </location>
</feature>
<feature type="site" description="Cleavage; by viral protease p15" evidence="2">
    <location>
        <begin position="239"/>
        <end position="240"/>
    </location>
</feature>
<feature type="site" description="Involved in capsid protein dimerization upon acidification" evidence="2">
    <location>
        <position position="418"/>
    </location>
</feature>
<feature type="site" description="Involved in capsid protein dimerization upon acidification" evidence="2">
    <location>
        <position position="430"/>
    </location>
</feature>
<feature type="site" description="Cleavage; by viral protease p15" evidence="2">
    <location>
        <begin position="476"/>
        <end position="477"/>
    </location>
</feature>
<feature type="site" description="Cleavage; by viral protease p15" evidence="2">
    <location>
        <begin position="479"/>
        <end position="480"/>
    </location>
</feature>
<feature type="site" description="Cleavage; by viral protease p15" evidence="2">
    <location>
        <begin position="488"/>
        <end position="489"/>
    </location>
</feature>
<feature type="site" description="Cleavage; by viral protease p15" evidence="2">
    <location>
        <begin position="577"/>
        <end position="578"/>
    </location>
</feature>
<feature type="site" description="Cleavage; by viral protease p15" evidence="3">
    <location>
        <begin position="708"/>
        <end position="709"/>
    </location>
</feature>
<feature type="site" description="Cleavage; by viral protease p15" evidence="3">
    <location>
        <begin position="1280"/>
        <end position="1281"/>
    </location>
</feature>
<feature type="site" description="Cleavage; by viral protease p15" evidence="1">
    <location>
        <begin position="1567"/>
        <end position="1568"/>
    </location>
</feature>
<feature type="mutagenesis site" description="Complete loss of activity." evidence="18">
    <original>D</original>
    <variation>N</variation>
    <location>
        <position position="1344"/>
    </location>
</feature>
<feature type="sequence conflict" description="In Ref. 4." evidence="21" ref="4">
    <original>V</original>
    <variation>A</variation>
    <location>
        <position position="1376"/>
    </location>
</feature>
<feature type="sequence conflict" description="In Ref. 4." evidence="21" ref="4">
    <original>R</original>
    <variation>K</variation>
    <location>
        <position position="1441"/>
    </location>
</feature>
<feature type="strand" evidence="42">
    <location>
        <begin position="1331"/>
        <end position="1333"/>
    </location>
</feature>
<feature type="strand" evidence="43">
    <location>
        <begin position="1340"/>
        <end position="1347"/>
    </location>
</feature>
<feature type="helix" evidence="43">
    <location>
        <begin position="1349"/>
        <end position="1351"/>
    </location>
</feature>
<feature type="strand" evidence="43">
    <location>
        <begin position="1356"/>
        <end position="1362"/>
    </location>
</feature>
<feature type="turn" evidence="43">
    <location>
        <begin position="1363"/>
        <end position="1365"/>
    </location>
</feature>
<feature type="strand" evidence="43">
    <location>
        <begin position="1368"/>
        <end position="1375"/>
    </location>
</feature>
<feature type="helix" evidence="43">
    <location>
        <begin position="1378"/>
        <end position="1392"/>
    </location>
</feature>
<feature type="strand" evidence="43">
    <location>
        <begin position="1396"/>
        <end position="1399"/>
    </location>
</feature>
<feature type="helix" evidence="43">
    <location>
        <begin position="1404"/>
        <end position="1407"/>
    </location>
</feature>
<feature type="helix" evidence="43">
    <location>
        <begin position="1409"/>
        <end position="1418"/>
    </location>
</feature>
<feature type="strand" evidence="43">
    <location>
        <begin position="1421"/>
        <end position="1423"/>
    </location>
</feature>
<feature type="strand" evidence="42">
    <location>
        <begin position="1428"/>
        <end position="1432"/>
    </location>
</feature>
<feature type="helix" evidence="43">
    <location>
        <begin position="1434"/>
        <end position="1453"/>
    </location>
</feature>
<feature type="strand" evidence="43">
    <location>
        <begin position="1457"/>
        <end position="1459"/>
    </location>
</feature>
<feature type="helix" evidence="43">
    <location>
        <begin position="1462"/>
        <end position="1477"/>
    </location>
</feature>
<reference key="1">
    <citation type="submission" date="1998-03" db="EMBL/GenBank/DDBJ databases">
        <title>Complete nucleotide sequence of avian sarcoma virus.</title>
        <authorList>
            <person name="Bouck J."/>
            <person name="Skalka A.M."/>
            <person name="Katz R.A."/>
        </authorList>
    </citation>
    <scope>NUCLEOTIDE SEQUENCE [GENOMIC DNA]</scope>
</reference>
<reference key="2">
    <citation type="journal article" date="2017" name="Curr. Opin. Struct. Biol.">
        <title>Retroviral intasomes arising.</title>
        <authorList>
            <person name="Engelman A.N."/>
            <person name="Cherepanov P."/>
        </authorList>
    </citation>
    <scope>REVIEW (INTEGRASE)</scope>
</reference>
<reference evidence="26 27 28" key="3">
    <citation type="journal article" date="1995" name="J. Mol. Biol.">
        <title>High-resolution structure of the catalytic domain of avian sarcoma virus integrase.</title>
        <authorList>
            <person name="Bujacz G."/>
            <person name="Jaskolski M."/>
            <person name="Alexandratos J."/>
            <person name="Wlodawer A."/>
            <person name="Merkel G."/>
            <person name="Katz R.A."/>
            <person name="Skalka A.M."/>
        </authorList>
    </citation>
    <scope>X-RAY CRYSTALLOGRAPHY (1.7 ANGSTROMS) OF 1332-1487</scope>
    <scope>SUBUNIT (INTEGRASE)</scope>
</reference>
<reference evidence="33 34 35" key="4">
    <citation type="journal article" date="1996" name="Structure">
        <title>The catalytic domain of avian sarcoma virus integrase: conformation of the active-site residues in the presence of divalent cations.</title>
        <authorList>
            <person name="Bujacz G."/>
            <person name="Jaskolski M."/>
            <person name="Alexandratos J."/>
            <person name="Wlodawer A."/>
            <person name="Merkel G."/>
            <person name="Katz R.A."/>
            <person name="Skalka A.M."/>
        </authorList>
    </citation>
    <scope>X-RAY CRYSTALLOGRAPHY (1.7 ANGSTROMS) OF 1334-1477</scope>
    <scope>ACTIVE SITE (INTEGRASE)</scope>
    <scope>COFACTOR (INTEGRASE)</scope>
</reference>
<reference evidence="36 37 38" key="5">
    <citation type="journal article" date="1997" name="J. Biol. Chem.">
        <title>Binding of different divalent cations to the active site of avian sarcoma virus integrase and their effects on enzymatic activity.</title>
        <authorList>
            <person name="Bujacz G."/>
            <person name="Alexandratos J."/>
            <person name="Wlodawer A."/>
            <person name="Merkel G."/>
            <person name="Andrake M."/>
            <person name="Katz R.A."/>
            <person name="Skalka A.M."/>
        </authorList>
    </citation>
    <scope>X-RAY CRYSTALLOGRAPHY (1.95 ANGSTROMS) OF 1334-1479 IN COMPLEX WITH ZN(2+)</scope>
    <scope>ACTIVE SITE (INTEGRASE)</scope>
    <scope>FUNCTION (INTEGRASE)</scope>
    <scope>COFACTOR (INTEGRASE)</scope>
</reference>
<reference evidence="23 24 25" key="6">
    <citation type="journal article" date="1998" name="Proc. Natl. Acad. Sci. U.S.A.">
        <title>Structure of the catalytic domain of avian sarcoma virus integrase with a bound HIV-1 integrase-targeted inhibitor.</title>
        <authorList>
            <person name="Lubkowski J."/>
            <person name="Yang F."/>
            <person name="Alexandratos J."/>
            <person name="Wlodawer A."/>
            <person name="Zhao H."/>
            <person name="Burke T.R. Jr."/>
            <person name="Neamati N."/>
            <person name="Pommier Y."/>
            <person name="Merkel G."/>
            <person name="Skalka A.M."/>
        </authorList>
    </citation>
    <scope>X-RAY CRYSTALLOGRAPHY (1.9 ANGSTROMS) OF 1332-1487 IN COMPLEX WITH A HIV-1 INTEGRASE-TARGETED INHIBITOR</scope>
</reference>
<reference evidence="39 40 41" key="7">
    <citation type="journal article" date="1998" name="J. Biol. Chem.">
        <title>Structural basis for inactivating mutations and pH-dependent activity of avian sarcoma virus integrase.</title>
        <authorList>
            <person name="Lubkowski J."/>
            <person name="Yang F."/>
            <person name="Alexandratos J."/>
            <person name="Merkel G."/>
            <person name="Katz R.A."/>
            <person name="Gravuer K."/>
            <person name="Skalka A.M."/>
            <person name="Wlodawer A."/>
        </authorList>
    </citation>
    <scope>X-RAY CRYSTALLOGRAPHY (2.2 ANGSTROMS) OF 1334-1479</scope>
    <scope>MUTAGENESIS OF ASP-1344</scope>
</reference>
<reference evidence="29 30 31 32" key="8">
    <citation type="journal article" date="1999" name="Biochemistry">
        <title>Atomic resolution structures of the core domain of avian sarcoma virus integrase and its D64N mutant.</title>
        <authorList>
            <person name="Lubkowski J."/>
            <person name="Dauter Z."/>
            <person name="Yang F."/>
            <person name="Alexandratos J."/>
            <person name="Merkel G."/>
            <person name="Skalka A.M."/>
            <person name="Wlodawer A."/>
        </authorList>
    </citation>
    <scope>X-RAY CRYSTALLOGRAPHY (1.02 ANGSTROMS) OF 1333-1487</scope>
</reference>
<dbReference type="EC" id="3.4.23.-" evidence="7"/>
<dbReference type="EC" id="2.7.7.49" evidence="8"/>
<dbReference type="EC" id="2.7.7.7" evidence="8"/>
<dbReference type="EC" id="3.1.26.4" evidence="9"/>
<dbReference type="EC" id="2.7.7.-" evidence="17"/>
<dbReference type="EC" id="3.1.-.-" evidence="17"/>
<dbReference type="EMBL" id="AF052428">
    <property type="protein sequence ID" value="AAC08988.1"/>
    <property type="status" value="ALT_INIT"/>
    <property type="molecule type" value="Genomic_DNA"/>
</dbReference>
<dbReference type="PDB" id="1A5V">
    <property type="method" value="X-ray"/>
    <property type="resolution" value="1.90 A"/>
    <property type="chains" value="A=1332-1487"/>
</dbReference>
<dbReference type="PDB" id="1A5W">
    <property type="method" value="X-ray"/>
    <property type="resolution" value="2.00 A"/>
    <property type="chains" value="A=1332-1487"/>
</dbReference>
<dbReference type="PDB" id="1A5X">
    <property type="method" value="X-ray"/>
    <property type="resolution" value="1.90 A"/>
    <property type="chains" value="A=1332-1487"/>
</dbReference>
<dbReference type="PDB" id="1ASU">
    <property type="method" value="X-ray"/>
    <property type="resolution" value="1.70 A"/>
    <property type="chains" value="A=1332-1487"/>
</dbReference>
<dbReference type="PDB" id="1ASV">
    <property type="method" value="X-ray"/>
    <property type="resolution" value="2.20 A"/>
    <property type="chains" value="A=1332-1487"/>
</dbReference>
<dbReference type="PDB" id="1ASW">
    <property type="method" value="X-ray"/>
    <property type="resolution" value="1.80 A"/>
    <property type="chains" value="A=1332-1487"/>
</dbReference>
<dbReference type="PDB" id="1CXQ">
    <property type="method" value="X-ray"/>
    <property type="resolution" value="1.02 A"/>
    <property type="chains" value="A=1333-1487"/>
</dbReference>
<dbReference type="PDB" id="1CXU">
    <property type="method" value="X-ray"/>
    <property type="resolution" value="1.42 A"/>
    <property type="chains" value="A=1333-1487"/>
</dbReference>
<dbReference type="PDB" id="1CZ9">
    <property type="method" value="X-ray"/>
    <property type="resolution" value="1.20 A"/>
    <property type="chains" value="A=1333-1487"/>
</dbReference>
<dbReference type="PDB" id="1CZB">
    <property type="method" value="X-ray"/>
    <property type="resolution" value="1.06 A"/>
    <property type="chains" value="A=1333-1487"/>
</dbReference>
<dbReference type="PDB" id="1VSD">
    <property type="method" value="X-ray"/>
    <property type="resolution" value="1.70 A"/>
    <property type="chains" value="A=1335-1479"/>
</dbReference>
<dbReference type="PDB" id="1VSE">
    <property type="method" value="X-ray"/>
    <property type="resolution" value="2.20 A"/>
    <property type="chains" value="A=1335-1479"/>
</dbReference>
<dbReference type="PDB" id="1VSF">
    <property type="method" value="X-ray"/>
    <property type="resolution" value="2.05 A"/>
    <property type="chains" value="A=1335-1479"/>
</dbReference>
<dbReference type="PDB" id="1VSH">
    <property type="method" value="X-ray"/>
    <property type="resolution" value="1.95 A"/>
    <property type="chains" value="A=1335-1479"/>
</dbReference>
<dbReference type="PDB" id="1VSI">
    <property type="method" value="X-ray"/>
    <property type="resolution" value="2.20 A"/>
    <property type="chains" value="A=1335-1479"/>
</dbReference>
<dbReference type="PDB" id="1VSJ">
    <property type="method" value="X-ray"/>
    <property type="resolution" value="2.10 A"/>
    <property type="chains" value="A=1335-1479"/>
</dbReference>
<dbReference type="PDB" id="1VSK">
    <property type="method" value="X-ray"/>
    <property type="resolution" value="2.20 A"/>
    <property type="chains" value="A=1334-1479"/>
</dbReference>
<dbReference type="PDB" id="1VSL">
    <property type="method" value="X-ray"/>
    <property type="resolution" value="2.20 A"/>
    <property type="chains" value="A=1334-1479"/>
</dbReference>
<dbReference type="PDB" id="1VSM">
    <property type="method" value="X-ray"/>
    <property type="resolution" value="2.15 A"/>
    <property type="chains" value="A=1334-1479"/>
</dbReference>
<dbReference type="PDB" id="3O4N">
    <property type="method" value="X-ray"/>
    <property type="resolution" value="1.80 A"/>
    <property type="chains" value="A/B=1333-1479"/>
</dbReference>
<dbReference type="PDB" id="3O4Q">
    <property type="method" value="X-ray"/>
    <property type="resolution" value="1.55 A"/>
    <property type="chains" value="A=1333-1479"/>
</dbReference>
<dbReference type="PDBsum" id="1A5V"/>
<dbReference type="PDBsum" id="1A5W"/>
<dbReference type="PDBsum" id="1A5X"/>
<dbReference type="PDBsum" id="1ASU"/>
<dbReference type="PDBsum" id="1ASV"/>
<dbReference type="PDBsum" id="1ASW"/>
<dbReference type="PDBsum" id="1CXQ"/>
<dbReference type="PDBsum" id="1CXU"/>
<dbReference type="PDBsum" id="1CZ9"/>
<dbReference type="PDBsum" id="1CZB"/>
<dbReference type="PDBsum" id="1VSD"/>
<dbReference type="PDBsum" id="1VSE"/>
<dbReference type="PDBsum" id="1VSF"/>
<dbReference type="PDBsum" id="1VSH"/>
<dbReference type="PDBsum" id="1VSI"/>
<dbReference type="PDBsum" id="1VSJ"/>
<dbReference type="PDBsum" id="1VSK"/>
<dbReference type="PDBsum" id="1VSL"/>
<dbReference type="PDBsum" id="1VSM"/>
<dbReference type="PDBsum" id="3O4N"/>
<dbReference type="PDBsum" id="3O4Q"/>
<dbReference type="BMRB" id="O92956"/>
<dbReference type="SMR" id="O92956"/>
<dbReference type="EvolutionaryTrace" id="O92956"/>
<dbReference type="Proteomes" id="UP000159275">
    <property type="component" value="Genome"/>
</dbReference>
<dbReference type="GO" id="GO:0044423">
    <property type="term" value="C:virion component"/>
    <property type="evidence" value="ECO:0007669"/>
    <property type="project" value="UniProtKB-KW"/>
</dbReference>
<dbReference type="GO" id="GO:0004190">
    <property type="term" value="F:aspartic-type endopeptidase activity"/>
    <property type="evidence" value="ECO:0007669"/>
    <property type="project" value="InterPro"/>
</dbReference>
<dbReference type="GO" id="GO:0003677">
    <property type="term" value="F:DNA binding"/>
    <property type="evidence" value="ECO:0007669"/>
    <property type="project" value="UniProtKB-KW"/>
</dbReference>
<dbReference type="GO" id="GO:0003887">
    <property type="term" value="F:DNA-directed DNA polymerase activity"/>
    <property type="evidence" value="ECO:0007669"/>
    <property type="project" value="UniProtKB-EC"/>
</dbReference>
<dbReference type="GO" id="GO:0035613">
    <property type="term" value="F:RNA stem-loop binding"/>
    <property type="evidence" value="ECO:0007669"/>
    <property type="project" value="TreeGrafter"/>
</dbReference>
<dbReference type="GO" id="GO:0003964">
    <property type="term" value="F:RNA-directed DNA polymerase activity"/>
    <property type="evidence" value="ECO:0007669"/>
    <property type="project" value="UniProtKB-KW"/>
</dbReference>
<dbReference type="GO" id="GO:0004523">
    <property type="term" value="F:RNA-DNA hybrid ribonuclease activity"/>
    <property type="evidence" value="ECO:0007669"/>
    <property type="project" value="UniProtKB-EC"/>
</dbReference>
<dbReference type="GO" id="GO:0008270">
    <property type="term" value="F:zinc ion binding"/>
    <property type="evidence" value="ECO:0007669"/>
    <property type="project" value="UniProtKB-KW"/>
</dbReference>
<dbReference type="GO" id="GO:0015074">
    <property type="term" value="P:DNA integration"/>
    <property type="evidence" value="ECO:0007669"/>
    <property type="project" value="UniProtKB-KW"/>
</dbReference>
<dbReference type="GO" id="GO:0006310">
    <property type="term" value="P:DNA recombination"/>
    <property type="evidence" value="ECO:0007669"/>
    <property type="project" value="UniProtKB-KW"/>
</dbReference>
<dbReference type="GO" id="GO:0075713">
    <property type="term" value="P:establishment of integrated proviral latency"/>
    <property type="evidence" value="ECO:0007669"/>
    <property type="project" value="UniProtKB-KW"/>
</dbReference>
<dbReference type="GO" id="GO:0006508">
    <property type="term" value="P:proteolysis"/>
    <property type="evidence" value="ECO:0007669"/>
    <property type="project" value="InterPro"/>
</dbReference>
<dbReference type="GO" id="GO:0046718">
    <property type="term" value="P:symbiont entry into host cell"/>
    <property type="evidence" value="ECO:0007669"/>
    <property type="project" value="UniProtKB-KW"/>
</dbReference>
<dbReference type="GO" id="GO:0044826">
    <property type="term" value="P:viral genome integration into host DNA"/>
    <property type="evidence" value="ECO:0007669"/>
    <property type="project" value="UniProtKB-KW"/>
</dbReference>
<dbReference type="GO" id="GO:0075523">
    <property type="term" value="P:viral translational frameshifting"/>
    <property type="evidence" value="ECO:0007669"/>
    <property type="project" value="UniProtKB-KW"/>
</dbReference>
<dbReference type="CDD" id="cd05482">
    <property type="entry name" value="HIV_retropepsin_like"/>
    <property type="match status" value="1"/>
</dbReference>
<dbReference type="CDD" id="cd01645">
    <property type="entry name" value="RT_Rtv"/>
    <property type="match status" value="1"/>
</dbReference>
<dbReference type="FunFam" id="1.10.375.10:FF:000003">
    <property type="entry name" value="Gag polyprotein"/>
    <property type="match status" value="1"/>
</dbReference>
<dbReference type="FunFam" id="3.30.420.10:FF:000184">
    <property type="entry name" value="Gag-Pol polyprotein"/>
    <property type="match status" value="1"/>
</dbReference>
<dbReference type="Gene3D" id="1.10.10.200">
    <property type="match status" value="1"/>
</dbReference>
<dbReference type="Gene3D" id="1.10.1200.30">
    <property type="match status" value="1"/>
</dbReference>
<dbReference type="Gene3D" id="3.30.70.270">
    <property type="match status" value="2"/>
</dbReference>
<dbReference type="Gene3D" id="2.40.70.10">
    <property type="entry name" value="Acid Proteases"/>
    <property type="match status" value="1"/>
</dbReference>
<dbReference type="Gene3D" id="3.10.10.10">
    <property type="entry name" value="HIV Type 1 Reverse Transcriptase, subunit A, domain 1"/>
    <property type="match status" value="1"/>
</dbReference>
<dbReference type="Gene3D" id="1.10.375.10">
    <property type="entry name" value="Human Immunodeficiency Virus Type 1 Capsid Protein"/>
    <property type="match status" value="1"/>
</dbReference>
<dbReference type="Gene3D" id="1.10.150.90">
    <property type="entry name" value="Immunodeficiency lentiviruses, gag gene matrix protein p17"/>
    <property type="match status" value="1"/>
</dbReference>
<dbReference type="Gene3D" id="2.30.30.10">
    <property type="entry name" value="Integrase, C-terminal domain superfamily, retroviral"/>
    <property type="match status" value="1"/>
</dbReference>
<dbReference type="Gene3D" id="3.30.420.10">
    <property type="entry name" value="Ribonuclease H-like superfamily/Ribonuclease H"/>
    <property type="match status" value="2"/>
</dbReference>
<dbReference type="Gene3D" id="4.10.60.10">
    <property type="entry name" value="Zinc finger, CCHC-type"/>
    <property type="match status" value="1"/>
</dbReference>
<dbReference type="InterPro" id="IPR001969">
    <property type="entry name" value="Aspartic_peptidase_AS"/>
</dbReference>
<dbReference type="InterPro" id="IPR043502">
    <property type="entry name" value="DNA/RNA_pol_sf"/>
</dbReference>
<dbReference type="InterPro" id="IPR004028">
    <property type="entry name" value="Gag_M"/>
</dbReference>
<dbReference type="InterPro" id="IPR017856">
    <property type="entry name" value="Integrase-like_N"/>
</dbReference>
<dbReference type="InterPro" id="IPR036862">
    <property type="entry name" value="Integrase_C_dom_sf_retrovir"/>
</dbReference>
<dbReference type="InterPro" id="IPR001037">
    <property type="entry name" value="Integrase_C_retrovir"/>
</dbReference>
<dbReference type="InterPro" id="IPR001584">
    <property type="entry name" value="Integrase_cat-core"/>
</dbReference>
<dbReference type="InterPro" id="IPR003308">
    <property type="entry name" value="Integrase_Zn-bd_dom_N"/>
</dbReference>
<dbReference type="InterPro" id="IPR012344">
    <property type="entry name" value="Matrix_HIV/RSV_N"/>
</dbReference>
<dbReference type="InterPro" id="IPR001995">
    <property type="entry name" value="Peptidase_A2_cat"/>
</dbReference>
<dbReference type="InterPro" id="IPR021109">
    <property type="entry name" value="Peptidase_aspartic_dom_sf"/>
</dbReference>
<dbReference type="InterPro" id="IPR034170">
    <property type="entry name" value="Retropepsin-like_cat_dom"/>
</dbReference>
<dbReference type="InterPro" id="IPR018061">
    <property type="entry name" value="Retropepsins"/>
</dbReference>
<dbReference type="InterPro" id="IPR008916">
    <property type="entry name" value="Retrov_capsid_C"/>
</dbReference>
<dbReference type="InterPro" id="IPR008919">
    <property type="entry name" value="Retrov_capsid_N"/>
</dbReference>
<dbReference type="InterPro" id="IPR010999">
    <property type="entry name" value="Retrovr_matrix"/>
</dbReference>
<dbReference type="InterPro" id="IPR043128">
    <property type="entry name" value="Rev_trsase/Diguanyl_cyclase"/>
</dbReference>
<dbReference type="InterPro" id="IPR012337">
    <property type="entry name" value="RNaseH-like_sf"/>
</dbReference>
<dbReference type="InterPro" id="IPR002156">
    <property type="entry name" value="RNaseH_domain"/>
</dbReference>
<dbReference type="InterPro" id="IPR036397">
    <property type="entry name" value="RNaseH_sf"/>
</dbReference>
<dbReference type="InterPro" id="IPR000477">
    <property type="entry name" value="RT_dom"/>
</dbReference>
<dbReference type="InterPro" id="IPR010661">
    <property type="entry name" value="RVT_thumb"/>
</dbReference>
<dbReference type="InterPro" id="IPR001878">
    <property type="entry name" value="Znf_CCHC"/>
</dbReference>
<dbReference type="InterPro" id="IPR036875">
    <property type="entry name" value="Znf_CCHC_sf"/>
</dbReference>
<dbReference type="PANTHER" id="PTHR41694">
    <property type="entry name" value="ENDOGENOUS RETROVIRUS GROUP K MEMBER POL PROTEIN"/>
    <property type="match status" value="1"/>
</dbReference>
<dbReference type="PANTHER" id="PTHR41694:SF3">
    <property type="entry name" value="RNA-DIRECTED DNA POLYMERASE-RELATED"/>
    <property type="match status" value="1"/>
</dbReference>
<dbReference type="Pfam" id="PF00607">
    <property type="entry name" value="Gag_p24"/>
    <property type="match status" value="1"/>
</dbReference>
<dbReference type="Pfam" id="PF00552">
    <property type="entry name" value="IN_DBD_C"/>
    <property type="match status" value="1"/>
</dbReference>
<dbReference type="Pfam" id="PF02022">
    <property type="entry name" value="Integrase_Zn"/>
    <property type="match status" value="1"/>
</dbReference>
<dbReference type="Pfam" id="PF02813">
    <property type="entry name" value="Retro_M"/>
    <property type="match status" value="1"/>
</dbReference>
<dbReference type="Pfam" id="PF00665">
    <property type="entry name" value="rve"/>
    <property type="match status" value="1"/>
</dbReference>
<dbReference type="Pfam" id="PF00077">
    <property type="entry name" value="RVP"/>
    <property type="match status" value="1"/>
</dbReference>
<dbReference type="Pfam" id="PF00078">
    <property type="entry name" value="RVT_1"/>
    <property type="match status" value="1"/>
</dbReference>
<dbReference type="Pfam" id="PF06817">
    <property type="entry name" value="RVT_thumb"/>
    <property type="match status" value="1"/>
</dbReference>
<dbReference type="Pfam" id="PF00098">
    <property type="entry name" value="zf-CCHC"/>
    <property type="match status" value="1"/>
</dbReference>
<dbReference type="SMART" id="SM00343">
    <property type="entry name" value="ZnF_C2HC"/>
    <property type="match status" value="2"/>
</dbReference>
<dbReference type="SUPFAM" id="SSF50630">
    <property type="entry name" value="Acid proteases"/>
    <property type="match status" value="1"/>
</dbReference>
<dbReference type="SUPFAM" id="SSF50122">
    <property type="entry name" value="DNA-binding domain of retroviral integrase"/>
    <property type="match status" value="1"/>
</dbReference>
<dbReference type="SUPFAM" id="SSF56672">
    <property type="entry name" value="DNA/RNA polymerases"/>
    <property type="match status" value="1"/>
</dbReference>
<dbReference type="SUPFAM" id="SSF46919">
    <property type="entry name" value="N-terminal Zn binding domain of HIV integrase"/>
    <property type="match status" value="1"/>
</dbReference>
<dbReference type="SUPFAM" id="SSF47836">
    <property type="entry name" value="Retroviral matrix proteins"/>
    <property type="match status" value="1"/>
</dbReference>
<dbReference type="SUPFAM" id="SSF47353">
    <property type="entry name" value="Retrovirus capsid dimerization domain-like"/>
    <property type="match status" value="1"/>
</dbReference>
<dbReference type="SUPFAM" id="SSF47943">
    <property type="entry name" value="Retrovirus capsid protein, N-terminal core domain"/>
    <property type="match status" value="1"/>
</dbReference>
<dbReference type="SUPFAM" id="SSF57756">
    <property type="entry name" value="Retrovirus zinc finger-like domains"/>
    <property type="match status" value="1"/>
</dbReference>
<dbReference type="SUPFAM" id="SSF53098">
    <property type="entry name" value="Ribonuclease H-like"/>
    <property type="match status" value="2"/>
</dbReference>
<dbReference type="PROSITE" id="PS50175">
    <property type="entry name" value="ASP_PROT_RETROV"/>
    <property type="match status" value="1"/>
</dbReference>
<dbReference type="PROSITE" id="PS00141">
    <property type="entry name" value="ASP_PROTEASE"/>
    <property type="match status" value="1"/>
</dbReference>
<dbReference type="PROSITE" id="PS50994">
    <property type="entry name" value="INTEGRASE"/>
    <property type="match status" value="1"/>
</dbReference>
<dbReference type="PROSITE" id="PS51027">
    <property type="entry name" value="INTEGRASE_DBD"/>
    <property type="match status" value="1"/>
</dbReference>
<dbReference type="PROSITE" id="PS50879">
    <property type="entry name" value="RNASE_H_1"/>
    <property type="match status" value="1"/>
</dbReference>
<dbReference type="PROSITE" id="PS50878">
    <property type="entry name" value="RT_POL"/>
    <property type="match status" value="1"/>
</dbReference>
<dbReference type="PROSITE" id="PS50158">
    <property type="entry name" value="ZF_CCHC"/>
    <property type="match status" value="1"/>
</dbReference>
<dbReference type="PROSITE" id="PS50876">
    <property type="entry name" value="ZF_INTEGRASE"/>
    <property type="match status" value="1"/>
</dbReference>
<organismHost>
    <name type="scientific">Gallus gallus</name>
    <name type="common">Chicken</name>
    <dbReference type="NCBI Taxonomy" id="9031"/>
</organismHost>